<gene>
    <name type="primary">MIC60</name>
    <name type="ordered locus">KLTH0H09724g</name>
</gene>
<comment type="function">
    <text evidence="1">Component of the MICOS complex, a large protein complex of the mitochondrial inner membrane that plays crucial roles in the maintenance of crista junctions, inner membrane architecture, and formation of contact sites to the outer membrane. Plays a role in keeping cristae membranes connected to the inner boundary membrane. Also promotes protein import via the mitochondrial intermembrane space assembly (MIA) pathway (By similarity).</text>
</comment>
<comment type="subunit">
    <text evidence="1">Component of the mitochondrial contact site and cristae organizing system (MICOS) complex.</text>
</comment>
<comment type="subcellular location">
    <subcellularLocation>
        <location evidence="1">Mitochondrion inner membrane</location>
        <topology evidence="1">Single-pass membrane protein</topology>
    </subcellularLocation>
</comment>
<comment type="similarity">
    <text evidence="3">Belongs to the MICOS complex subunit Mic60 family.</text>
</comment>
<evidence type="ECO:0000250" key="1"/>
<evidence type="ECO:0000255" key="2"/>
<evidence type="ECO:0000305" key="3"/>
<evidence type="ECO:0007829" key="4">
    <source>
        <dbReference type="PDB" id="7PUZ"/>
    </source>
</evidence>
<name>MIC60_LACTC</name>
<organism>
    <name type="scientific">Lachancea thermotolerans (strain ATCC 56472 / CBS 6340 / NRRL Y-8284)</name>
    <name type="common">Yeast</name>
    <name type="synonym">Kluyveromyces thermotolerans</name>
    <dbReference type="NCBI Taxonomy" id="559295"/>
    <lineage>
        <taxon>Eukaryota</taxon>
        <taxon>Fungi</taxon>
        <taxon>Dikarya</taxon>
        <taxon>Ascomycota</taxon>
        <taxon>Saccharomycotina</taxon>
        <taxon>Saccharomycetes</taxon>
        <taxon>Saccharomycetales</taxon>
        <taxon>Saccharomycetaceae</taxon>
        <taxon>Lachancea</taxon>
    </lineage>
</organism>
<proteinExistence type="evidence at protein level"/>
<reference key="1">
    <citation type="journal article" date="2009" name="Genome Res.">
        <title>Comparative genomics of protoploid Saccharomycetaceae.</title>
        <authorList>
            <consortium name="The Genolevures Consortium"/>
            <person name="Souciet J.-L."/>
            <person name="Dujon B."/>
            <person name="Gaillardin C."/>
            <person name="Johnston M."/>
            <person name="Baret P.V."/>
            <person name="Cliften P."/>
            <person name="Sherman D.J."/>
            <person name="Weissenbach J."/>
            <person name="Westhof E."/>
            <person name="Wincker P."/>
            <person name="Jubin C."/>
            <person name="Poulain J."/>
            <person name="Barbe V."/>
            <person name="Segurens B."/>
            <person name="Artiguenave F."/>
            <person name="Anthouard V."/>
            <person name="Vacherie B."/>
            <person name="Val M.-E."/>
            <person name="Fulton R.S."/>
            <person name="Minx P."/>
            <person name="Wilson R."/>
            <person name="Durrens P."/>
            <person name="Jean G."/>
            <person name="Marck C."/>
            <person name="Martin T."/>
            <person name="Nikolski M."/>
            <person name="Rolland T."/>
            <person name="Seret M.-L."/>
            <person name="Casaregola S."/>
            <person name="Despons L."/>
            <person name="Fairhead C."/>
            <person name="Fischer G."/>
            <person name="Lafontaine I."/>
            <person name="Leh V."/>
            <person name="Lemaire M."/>
            <person name="de Montigny J."/>
            <person name="Neuveglise C."/>
            <person name="Thierry A."/>
            <person name="Blanc-Lenfle I."/>
            <person name="Bleykasten C."/>
            <person name="Diffels J."/>
            <person name="Fritsch E."/>
            <person name="Frangeul L."/>
            <person name="Goeffon A."/>
            <person name="Jauniaux N."/>
            <person name="Kachouri-Lafond R."/>
            <person name="Payen C."/>
            <person name="Potier S."/>
            <person name="Pribylova L."/>
            <person name="Ozanne C."/>
            <person name="Richard G.-F."/>
            <person name="Sacerdot C."/>
            <person name="Straub M.-L."/>
            <person name="Talla E."/>
        </authorList>
    </citation>
    <scope>NUCLEOTIDE SEQUENCE [LARGE SCALE GENOMIC DNA]</scope>
    <source>
        <strain>ATCC 56472 / CBS 6340 / NRRL Y-8284</strain>
    </source>
</reference>
<keyword id="KW-0002">3D-structure</keyword>
<keyword id="KW-0175">Coiled coil</keyword>
<keyword id="KW-0472">Membrane</keyword>
<keyword id="KW-0496">Mitochondrion</keyword>
<keyword id="KW-0999">Mitochondrion inner membrane</keyword>
<keyword id="KW-1185">Reference proteome</keyword>
<keyword id="KW-0809">Transit peptide</keyword>
<keyword id="KW-0812">Transmembrane</keyword>
<keyword id="KW-1133">Transmembrane helix</keyword>
<protein>
    <recommendedName>
        <fullName>MICOS complex subunit MIC60</fullName>
    </recommendedName>
    <alternativeName>
        <fullName>Mitofilin</fullName>
    </alternativeName>
</protein>
<dbReference type="EMBL" id="CU928180">
    <property type="protein sequence ID" value="CAR30436.1"/>
    <property type="molecule type" value="Genomic_DNA"/>
</dbReference>
<dbReference type="RefSeq" id="XP_002556298.1">
    <property type="nucleotide sequence ID" value="XM_002556252.1"/>
</dbReference>
<dbReference type="PDB" id="7PUZ">
    <property type="method" value="X-ray"/>
    <property type="resolution" value="2.84 A"/>
    <property type="chains" value="A=206-382"/>
</dbReference>
<dbReference type="PDBsum" id="7PUZ"/>
<dbReference type="SMR" id="C5E325"/>
<dbReference type="FunCoup" id="C5E325">
    <property type="interactions" value="224"/>
</dbReference>
<dbReference type="STRING" id="559295.C5E325"/>
<dbReference type="GeneID" id="8294623"/>
<dbReference type="KEGG" id="lth:KLTH0H09724g"/>
<dbReference type="eggNOG" id="KOG1854">
    <property type="taxonomic scope" value="Eukaryota"/>
</dbReference>
<dbReference type="HOGENOM" id="CLU_008024_2_0_1"/>
<dbReference type="InParanoid" id="C5E325"/>
<dbReference type="OMA" id="DYATDAY"/>
<dbReference type="OrthoDB" id="10261039at2759"/>
<dbReference type="Proteomes" id="UP000002036">
    <property type="component" value="Chromosome H"/>
</dbReference>
<dbReference type="GO" id="GO:0061617">
    <property type="term" value="C:MICOS complex"/>
    <property type="evidence" value="ECO:0007669"/>
    <property type="project" value="TreeGrafter"/>
</dbReference>
<dbReference type="GO" id="GO:0042407">
    <property type="term" value="P:cristae formation"/>
    <property type="evidence" value="ECO:0007669"/>
    <property type="project" value="TreeGrafter"/>
</dbReference>
<dbReference type="InterPro" id="IPR019133">
    <property type="entry name" value="MIC60"/>
</dbReference>
<dbReference type="PANTHER" id="PTHR15415:SF7">
    <property type="entry name" value="MICOS COMPLEX SUBUNIT MIC60"/>
    <property type="match status" value="1"/>
</dbReference>
<dbReference type="PANTHER" id="PTHR15415">
    <property type="entry name" value="MITOFILIN"/>
    <property type="match status" value="1"/>
</dbReference>
<dbReference type="Pfam" id="PF09731">
    <property type="entry name" value="Mitofilin"/>
    <property type="match status" value="1"/>
</dbReference>
<feature type="transit peptide" description="Mitochondrion" evidence="2">
    <location>
        <begin position="1"/>
        <end position="24"/>
    </location>
</feature>
<feature type="chain" id="PRO_0000406657" description="MICOS complex subunit MIC60">
    <location>
        <begin position="25"/>
        <end position="527"/>
    </location>
</feature>
<feature type="topological domain" description="Mitochondrial matrix" evidence="2">
    <location>
        <begin position="25"/>
        <end position="40"/>
    </location>
</feature>
<feature type="transmembrane region" description="Helical" evidence="2">
    <location>
        <begin position="41"/>
        <end position="61"/>
    </location>
</feature>
<feature type="topological domain" description="Mitochondrial intermembrane" evidence="2">
    <location>
        <begin position="62"/>
        <end position="527"/>
    </location>
</feature>
<feature type="coiled-coil region" evidence="2">
    <location>
        <begin position="313"/>
        <end position="335"/>
    </location>
</feature>
<feature type="helix" evidence="4">
    <location>
        <begin position="236"/>
        <end position="332"/>
    </location>
</feature>
<feature type="helix" evidence="4">
    <location>
        <begin position="340"/>
        <end position="356"/>
    </location>
</feature>
<feature type="helix" evidence="4">
    <location>
        <begin position="365"/>
        <end position="367"/>
    </location>
</feature>
<feature type="helix" evidence="4">
    <location>
        <begin position="370"/>
        <end position="379"/>
    </location>
</feature>
<accession>C5E325</accession>
<sequence length="527" mass="58100">MLRSRATINCVKSGRAGRALSRGMATFEGQPAARPNRLSKLLVRVGLATVGFYVGGVTLSLNNDQFGELFCDNVPLAESLVEMYEEFRDEKMQASRMSLDELKQKFGELGTKVDRIPNRGADPALTSQAVAALPASKEVRLEDESLVKLRLPEVEQLGSCKRATPLVESVNAAVAAVNEQSLLLPEDTYNAVHDAFTKLKSALQAINEDIRTNVAESVAVQYGQASKDLHESFEIRAKSREVELTQQFLNEFNAFKAQLEKHSSEELASALKANEQALLAKQSNEVALLSMKQVEEFTKILSEKLDQERQGRLSKLEALNGSVQELAEAVDQVDTLVMKSEVLSQLSLLTTLLKNKLHAGDESSVKIDSELARLKTLCDILPGRPSKCCSKNPQLLDVVVSQLDSLASQQLILSNEQLYNRWTLLQKDLSTSSLLPPNAGILGHISAKIFGFFLFNKNGAPVDNDIDSVIARVGQNLRLSKLDKAVEEVVALKGWPRVLCDEWVQEARKKLEIETLIDALDCEIRSS</sequence>